<organism>
    <name type="scientific">Streptococcus thermophilus (strain ATCC BAA-250 / LMG 18311)</name>
    <dbReference type="NCBI Taxonomy" id="264199"/>
    <lineage>
        <taxon>Bacteria</taxon>
        <taxon>Bacillati</taxon>
        <taxon>Bacillota</taxon>
        <taxon>Bacilli</taxon>
        <taxon>Lactobacillales</taxon>
        <taxon>Streptococcaceae</taxon>
        <taxon>Streptococcus</taxon>
    </lineage>
</organism>
<feature type="chain" id="PRO_0000243504" description="Large ribosomal subunit protein bL12">
    <location>
        <begin position="1"/>
        <end position="127"/>
    </location>
</feature>
<name>RL7_STRT2</name>
<keyword id="KW-1185">Reference proteome</keyword>
<keyword id="KW-0687">Ribonucleoprotein</keyword>
<keyword id="KW-0689">Ribosomal protein</keyword>
<sequence length="127" mass="12948">MEEITMALNIENIIAEIKEASILELNDLVKAIEEEFGVTAAAPVAAAADGAADAGAAKDSFDVELTSAGDKKVGVIKVVREITGEGLKEAKAIVDGAPSVIKEGVAAAEAEEIKAKLEEAGASVTLK</sequence>
<evidence type="ECO:0000255" key="1">
    <source>
        <dbReference type="HAMAP-Rule" id="MF_00368"/>
    </source>
</evidence>
<evidence type="ECO:0000305" key="2"/>
<gene>
    <name evidence="1" type="primary">rplL</name>
    <name type="ordered locus">stu0537</name>
</gene>
<proteinExistence type="inferred from homology"/>
<reference key="1">
    <citation type="journal article" date="2004" name="Nat. Biotechnol.">
        <title>Complete sequence and comparative genome analysis of the dairy bacterium Streptococcus thermophilus.</title>
        <authorList>
            <person name="Bolotin A."/>
            <person name="Quinquis B."/>
            <person name="Renault P."/>
            <person name="Sorokin A."/>
            <person name="Ehrlich S.D."/>
            <person name="Kulakauskas S."/>
            <person name="Lapidus A."/>
            <person name="Goltsman E."/>
            <person name="Mazur M."/>
            <person name="Pusch G.D."/>
            <person name="Fonstein M."/>
            <person name="Overbeek R."/>
            <person name="Kyprides N."/>
            <person name="Purnelle B."/>
            <person name="Prozzi D."/>
            <person name="Ngui K."/>
            <person name="Masuy D."/>
            <person name="Hancy F."/>
            <person name="Burteau S."/>
            <person name="Boutry M."/>
            <person name="Delcour J."/>
            <person name="Goffeau A."/>
            <person name="Hols P."/>
        </authorList>
    </citation>
    <scope>NUCLEOTIDE SEQUENCE [LARGE SCALE GENOMIC DNA]</scope>
    <source>
        <strain>ATCC BAA-250 / LMG 18311</strain>
    </source>
</reference>
<dbReference type="EMBL" id="CP000023">
    <property type="protein sequence ID" value="AAV60244.1"/>
    <property type="molecule type" value="Genomic_DNA"/>
</dbReference>
<dbReference type="SMR" id="Q5M5F1"/>
<dbReference type="STRING" id="264199.stu0537"/>
<dbReference type="KEGG" id="stl:stu0537"/>
<dbReference type="eggNOG" id="COG0222">
    <property type="taxonomic scope" value="Bacteria"/>
</dbReference>
<dbReference type="HOGENOM" id="CLU_086499_3_2_9"/>
<dbReference type="Proteomes" id="UP000001170">
    <property type="component" value="Chromosome"/>
</dbReference>
<dbReference type="GO" id="GO:0022625">
    <property type="term" value="C:cytosolic large ribosomal subunit"/>
    <property type="evidence" value="ECO:0007669"/>
    <property type="project" value="TreeGrafter"/>
</dbReference>
<dbReference type="GO" id="GO:0003729">
    <property type="term" value="F:mRNA binding"/>
    <property type="evidence" value="ECO:0007669"/>
    <property type="project" value="TreeGrafter"/>
</dbReference>
<dbReference type="GO" id="GO:0003735">
    <property type="term" value="F:structural constituent of ribosome"/>
    <property type="evidence" value="ECO:0007669"/>
    <property type="project" value="InterPro"/>
</dbReference>
<dbReference type="GO" id="GO:0006412">
    <property type="term" value="P:translation"/>
    <property type="evidence" value="ECO:0007669"/>
    <property type="project" value="UniProtKB-UniRule"/>
</dbReference>
<dbReference type="CDD" id="cd00387">
    <property type="entry name" value="Ribosomal_L7_L12"/>
    <property type="match status" value="1"/>
</dbReference>
<dbReference type="FunFam" id="1.20.5.710:FF:000002">
    <property type="entry name" value="50S ribosomal protein L7/L12"/>
    <property type="match status" value="1"/>
</dbReference>
<dbReference type="FunFam" id="3.30.1390.10:FF:000001">
    <property type="entry name" value="50S ribosomal protein L7/L12"/>
    <property type="match status" value="1"/>
</dbReference>
<dbReference type="Gene3D" id="3.30.1390.10">
    <property type="match status" value="1"/>
</dbReference>
<dbReference type="Gene3D" id="1.20.5.710">
    <property type="entry name" value="Single helix bin"/>
    <property type="match status" value="1"/>
</dbReference>
<dbReference type="HAMAP" id="MF_00368">
    <property type="entry name" value="Ribosomal_bL12"/>
    <property type="match status" value="1"/>
</dbReference>
<dbReference type="InterPro" id="IPR000206">
    <property type="entry name" value="Ribosomal_bL12"/>
</dbReference>
<dbReference type="InterPro" id="IPR013823">
    <property type="entry name" value="Ribosomal_bL12_C"/>
</dbReference>
<dbReference type="InterPro" id="IPR014719">
    <property type="entry name" value="Ribosomal_bL12_C/ClpS-like"/>
</dbReference>
<dbReference type="InterPro" id="IPR008932">
    <property type="entry name" value="Ribosomal_bL12_oligo"/>
</dbReference>
<dbReference type="InterPro" id="IPR036235">
    <property type="entry name" value="Ribosomal_bL12_oligo_N_sf"/>
</dbReference>
<dbReference type="NCBIfam" id="TIGR00855">
    <property type="entry name" value="L12"/>
    <property type="match status" value="1"/>
</dbReference>
<dbReference type="PANTHER" id="PTHR45987">
    <property type="entry name" value="39S RIBOSOMAL PROTEIN L12"/>
    <property type="match status" value="1"/>
</dbReference>
<dbReference type="PANTHER" id="PTHR45987:SF4">
    <property type="entry name" value="LARGE RIBOSOMAL SUBUNIT PROTEIN BL12M"/>
    <property type="match status" value="1"/>
</dbReference>
<dbReference type="Pfam" id="PF00542">
    <property type="entry name" value="Ribosomal_L12"/>
    <property type="match status" value="1"/>
</dbReference>
<dbReference type="Pfam" id="PF16320">
    <property type="entry name" value="Ribosomal_L12_N"/>
    <property type="match status" value="1"/>
</dbReference>
<dbReference type="SUPFAM" id="SSF54736">
    <property type="entry name" value="ClpS-like"/>
    <property type="match status" value="1"/>
</dbReference>
<dbReference type="SUPFAM" id="SSF48300">
    <property type="entry name" value="Ribosomal protein L7/12, oligomerisation (N-terminal) domain"/>
    <property type="match status" value="1"/>
</dbReference>
<protein>
    <recommendedName>
        <fullName evidence="1">Large ribosomal subunit protein bL12</fullName>
    </recommendedName>
    <alternativeName>
        <fullName evidence="2">50S ribosomal protein L7/L12</fullName>
    </alternativeName>
</protein>
<comment type="function">
    <text evidence="1">Forms part of the ribosomal stalk which helps the ribosome interact with GTP-bound translation factors. Is thus essential for accurate translation.</text>
</comment>
<comment type="subunit">
    <text evidence="1">Homodimer. Part of the ribosomal stalk of the 50S ribosomal subunit. Forms a multimeric L10(L12)X complex, where L10 forms an elongated spine to which 2 to 4 L12 dimers bind in a sequential fashion. Binds GTP-bound translation factors.</text>
</comment>
<comment type="similarity">
    <text evidence="1">Belongs to the bacterial ribosomal protein bL12 family.</text>
</comment>
<accession>Q5M5F1</accession>